<accession>P38545</accession>
<proteinExistence type="evidence at transcript level"/>
<dbReference type="EMBL" id="U06051">
    <property type="protein sequence ID" value="AAA19587.1"/>
    <property type="molecule type" value="mRNA"/>
</dbReference>
<dbReference type="EMBL" id="X73954">
    <property type="protein sequence ID" value="CAA52140.1"/>
    <property type="molecule type" value="Genomic_DNA"/>
</dbReference>
<dbReference type="PIR" id="JC2374">
    <property type="entry name" value="JC2374"/>
</dbReference>
<dbReference type="PIR" id="S40121">
    <property type="entry name" value="S40121"/>
</dbReference>
<dbReference type="SMR" id="P38545"/>
<dbReference type="DrugBank" id="DB11638">
    <property type="generic name" value="Artenimol"/>
</dbReference>
<dbReference type="EnsemblProtists" id="CZT98839">
    <property type="protein sequence ID" value="CZT98839"/>
    <property type="gene ID" value="PF3D7_1117700"/>
</dbReference>
<dbReference type="VEuPathDB" id="PlasmoDB:PF3D7_1117700"/>
<dbReference type="VEuPathDB" id="PlasmoDB:Pf7G8-2_000340500"/>
<dbReference type="VEuPathDB" id="PlasmoDB:Pf7G8_110021300"/>
<dbReference type="VEuPathDB" id="PlasmoDB:PfCD01_110023100"/>
<dbReference type="VEuPathDB" id="PlasmoDB:PfDd2_110020700"/>
<dbReference type="VEuPathDB" id="PlasmoDB:PfGA01_110021900"/>
<dbReference type="VEuPathDB" id="PlasmoDB:PfGB4_110024200"/>
<dbReference type="VEuPathDB" id="PlasmoDB:PfGN01_110022200"/>
<dbReference type="VEuPathDB" id="PlasmoDB:PfHB3_110020800"/>
<dbReference type="VEuPathDB" id="PlasmoDB:PfIT_110022000"/>
<dbReference type="VEuPathDB" id="PlasmoDB:PfKE01_110022200"/>
<dbReference type="VEuPathDB" id="PlasmoDB:PfKH01_110021800"/>
<dbReference type="VEuPathDB" id="PlasmoDB:PfKH02_110022700"/>
<dbReference type="VEuPathDB" id="PlasmoDB:PfML01_110022500"/>
<dbReference type="VEuPathDB" id="PlasmoDB:PfNF135_110020900"/>
<dbReference type="VEuPathDB" id="PlasmoDB:PfNF166_110021100"/>
<dbReference type="VEuPathDB" id="PlasmoDB:PfNF54_110022000"/>
<dbReference type="VEuPathDB" id="PlasmoDB:PfSD01_110020300"/>
<dbReference type="VEuPathDB" id="PlasmoDB:PfSN01_110020800"/>
<dbReference type="VEuPathDB" id="PlasmoDB:PfTG01_110022100"/>
<dbReference type="OMA" id="FNAWDTA"/>
<dbReference type="GO" id="GO:0005737">
    <property type="term" value="C:cytoplasm"/>
    <property type="evidence" value="ECO:0007669"/>
    <property type="project" value="TreeGrafter"/>
</dbReference>
<dbReference type="GO" id="GO:0005634">
    <property type="term" value="C:nucleus"/>
    <property type="evidence" value="ECO:0007669"/>
    <property type="project" value="UniProtKB-SubCell"/>
</dbReference>
<dbReference type="GO" id="GO:0005525">
    <property type="term" value="F:GTP binding"/>
    <property type="evidence" value="ECO:0007669"/>
    <property type="project" value="UniProtKB-KW"/>
</dbReference>
<dbReference type="GO" id="GO:0003924">
    <property type="term" value="F:GTPase activity"/>
    <property type="evidence" value="ECO:0007669"/>
    <property type="project" value="InterPro"/>
</dbReference>
<dbReference type="GO" id="GO:0006606">
    <property type="term" value="P:protein import into nucleus"/>
    <property type="evidence" value="ECO:0007669"/>
    <property type="project" value="TreeGrafter"/>
</dbReference>
<dbReference type="GO" id="GO:0000054">
    <property type="term" value="P:ribosomal subunit export from nucleus"/>
    <property type="evidence" value="ECO:0007669"/>
    <property type="project" value="TreeGrafter"/>
</dbReference>
<dbReference type="CDD" id="cd00877">
    <property type="entry name" value="Ran"/>
    <property type="match status" value="1"/>
</dbReference>
<dbReference type="FunFam" id="3.40.50.300:FF:001228">
    <property type="entry name" value="GTP-binding nuclear protein"/>
    <property type="match status" value="1"/>
</dbReference>
<dbReference type="Gene3D" id="3.40.50.300">
    <property type="entry name" value="P-loop containing nucleotide triphosphate hydrolases"/>
    <property type="match status" value="1"/>
</dbReference>
<dbReference type="InterPro" id="IPR027417">
    <property type="entry name" value="P-loop_NTPase"/>
</dbReference>
<dbReference type="InterPro" id="IPR002041">
    <property type="entry name" value="Ran_GTPase"/>
</dbReference>
<dbReference type="InterPro" id="IPR005225">
    <property type="entry name" value="Small_GTP-bd"/>
</dbReference>
<dbReference type="InterPro" id="IPR001806">
    <property type="entry name" value="Small_GTPase"/>
</dbReference>
<dbReference type="NCBIfam" id="TIGR00231">
    <property type="entry name" value="small_GTP"/>
    <property type="match status" value="1"/>
</dbReference>
<dbReference type="PANTHER" id="PTHR24071:SF0">
    <property type="entry name" value="GTP-BINDING NUCLEAR PROTEIN RAN"/>
    <property type="match status" value="1"/>
</dbReference>
<dbReference type="PANTHER" id="PTHR24071">
    <property type="entry name" value="RAN GTPASE"/>
    <property type="match status" value="1"/>
</dbReference>
<dbReference type="Pfam" id="PF00071">
    <property type="entry name" value="Ras"/>
    <property type="match status" value="1"/>
</dbReference>
<dbReference type="PRINTS" id="PR00627">
    <property type="entry name" value="GTPRANTC4"/>
</dbReference>
<dbReference type="SMART" id="SM00175">
    <property type="entry name" value="RAB"/>
    <property type="match status" value="1"/>
</dbReference>
<dbReference type="SMART" id="SM00176">
    <property type="entry name" value="RAN"/>
    <property type="match status" value="1"/>
</dbReference>
<dbReference type="SMART" id="SM00173">
    <property type="entry name" value="RAS"/>
    <property type="match status" value="1"/>
</dbReference>
<dbReference type="SMART" id="SM00174">
    <property type="entry name" value="RHO"/>
    <property type="match status" value="1"/>
</dbReference>
<dbReference type="SUPFAM" id="SSF52540">
    <property type="entry name" value="P-loop containing nucleoside triphosphate hydrolases"/>
    <property type="match status" value="1"/>
</dbReference>
<dbReference type="PROSITE" id="PS51418">
    <property type="entry name" value="RAN"/>
    <property type="match status" value="1"/>
</dbReference>
<organism>
    <name type="scientific">Plasmodium falciparum</name>
    <dbReference type="NCBI Taxonomy" id="5833"/>
    <lineage>
        <taxon>Eukaryota</taxon>
        <taxon>Sar</taxon>
        <taxon>Alveolata</taxon>
        <taxon>Apicomplexa</taxon>
        <taxon>Aconoidasida</taxon>
        <taxon>Haemosporida</taxon>
        <taxon>Plasmodiidae</taxon>
        <taxon>Plasmodium</taxon>
        <taxon>Plasmodium (Laverania)</taxon>
    </lineage>
</organism>
<sequence>MDSQEYIPQYKLILVGDGGVGKTTFVKRHLTGEFEKKYIPTLGVEVHPLKFQTNFGKTQFNVWDTAGQEKFGGLRDGYYIKSDCAIIMFDVSSRITYKNVPNWYRDITRVCETIPMVLVGNKVDVKDRQVKSRQIQFHRKRNLQYYDLSARSNYNFEKPFLWLARRLSNQPNLVFVGEHAKAPEFQIDLNIVREAEKELEQAAAVAIDEEDIEN</sequence>
<protein>
    <recommendedName>
        <fullName>GTP-binding nuclear protein Ran</fullName>
    </recommendedName>
    <alternativeName>
        <fullName>GTPase Ran</fullName>
    </alternativeName>
    <alternativeName>
        <fullName>Ras-like protein TC4</fullName>
    </alternativeName>
</protein>
<feature type="chain" id="PRO_0000208714" description="GTP-binding nuclear protein Ran">
    <location>
        <begin position="1"/>
        <end position="214"/>
    </location>
</feature>
<feature type="domain" description="Small GTPase Ran-type" evidence="3">
    <location>
        <begin position="6"/>
        <end position="170"/>
    </location>
</feature>
<feature type="region of interest" description="Switch-I" evidence="3">
    <location>
        <begin position="36"/>
        <end position="44"/>
    </location>
</feature>
<feature type="region of interest" description="Switch-II" evidence="3">
    <location>
        <begin position="67"/>
        <end position="83"/>
    </location>
</feature>
<feature type="binding site" evidence="2">
    <location>
        <begin position="17"/>
        <end position="24"/>
    </location>
    <ligand>
        <name>GTP</name>
        <dbReference type="ChEBI" id="CHEBI:37565"/>
    </ligand>
</feature>
<feature type="binding site" evidence="2">
    <location>
        <position position="67"/>
    </location>
    <ligand>
        <name>GTP</name>
        <dbReference type="ChEBI" id="CHEBI:37565"/>
    </ligand>
</feature>
<feature type="binding site" evidence="2">
    <location>
        <begin position="121"/>
        <end position="124"/>
    </location>
    <ligand>
        <name>GTP</name>
        <dbReference type="ChEBI" id="CHEBI:37565"/>
    </ligand>
</feature>
<feature type="binding site" evidence="2">
    <location>
        <begin position="149"/>
        <end position="151"/>
    </location>
    <ligand>
        <name>GTP</name>
        <dbReference type="ChEBI" id="CHEBI:37565"/>
    </ligand>
</feature>
<feature type="sequence variant" description="In strain: IT04.">
    <original>P</original>
    <variation>A</variation>
    <location>
        <position position="40"/>
    </location>
</feature>
<feature type="sequence variant" description="In strain: IT04.">
    <original>E</original>
    <variation>G</variation>
    <location>
        <position position="196"/>
    </location>
</feature>
<keyword id="KW-0342">GTP-binding</keyword>
<keyword id="KW-0547">Nucleotide-binding</keyword>
<keyword id="KW-0539">Nucleus</keyword>
<keyword id="KW-0653">Protein transport</keyword>
<keyword id="KW-0813">Transport</keyword>
<evidence type="ECO:0000250" key="1"/>
<evidence type="ECO:0000250" key="2">
    <source>
        <dbReference type="UniProtKB" id="P62825"/>
    </source>
</evidence>
<evidence type="ECO:0000255" key="3">
    <source>
        <dbReference type="PROSITE-ProRule" id="PRU00752"/>
    </source>
</evidence>
<evidence type="ECO:0000305" key="4"/>
<comment type="function">
    <text evidence="1">GTP-binding protein involved in nucleocytoplasmic transport. Required for the import of protein into the nucleus and also for RNA export. Involved in chromatin condensation and control of cell cycle (By similarity).</text>
</comment>
<comment type="subunit">
    <text evidence="2">Found in a nuclear export complex with RanGTP, exportin and pre-miRNA (By similarity).</text>
</comment>
<comment type="subcellular location">
    <subcellularLocation>
        <location evidence="1">Nucleus</location>
    </subcellularLocation>
</comment>
<comment type="similarity">
    <text evidence="3 4">Belongs to the small GTPase superfamily. Ran family.</text>
</comment>
<name>RAN_PLAFA</name>
<reference key="1">
    <citation type="journal article" date="1994" name="Biochem. Biophys. Res. Commun.">
        <title>Cloning and expression of a cDNA encoding the homologue of Ran/TC4 GTP-binding protein from Plasmodium falciparum.</title>
        <authorList>
            <person name="Dontfraid F.F."/>
            <person name="Chakrabarti D."/>
        </authorList>
    </citation>
    <scope>NUCLEOTIDE SEQUENCE [MRNA]</scope>
    <source>
        <strain>DD2</strain>
    </source>
</reference>
<reference key="2">
    <citation type="journal article" date="1994" name="Mol. Biochem. Parasitol.">
        <title>Cloning and characterisation of a Plasmodium falciparum homologue of the Ran/TC4 signal transducing GTPase involved in cell cycle control.</title>
        <authorList>
            <person name="Sultan A."/>
            <person name="Richardson W."/>
            <person name="Alano P."/>
            <person name="Arnot D."/>
            <person name="Doerig C."/>
        </authorList>
    </citation>
    <scope>NUCLEOTIDE SEQUENCE [GENOMIC DNA]</scope>
    <source>
        <strain>IT04</strain>
    </source>
</reference>